<feature type="chain" id="PRO_0000187831" description="Peptidyl-tRNA hydrolase">
    <location>
        <begin position="1"/>
        <end position="189"/>
    </location>
</feature>
<feature type="active site" description="Proton acceptor" evidence="1">
    <location>
        <position position="20"/>
    </location>
</feature>
<feature type="binding site" evidence="1">
    <location>
        <position position="15"/>
    </location>
    <ligand>
        <name>tRNA</name>
        <dbReference type="ChEBI" id="CHEBI:17843"/>
    </ligand>
</feature>
<feature type="binding site" evidence="1">
    <location>
        <position position="66"/>
    </location>
    <ligand>
        <name>tRNA</name>
        <dbReference type="ChEBI" id="CHEBI:17843"/>
    </ligand>
</feature>
<feature type="binding site" evidence="1">
    <location>
        <position position="68"/>
    </location>
    <ligand>
        <name>tRNA</name>
        <dbReference type="ChEBI" id="CHEBI:17843"/>
    </ligand>
</feature>
<feature type="binding site" evidence="1">
    <location>
        <position position="114"/>
    </location>
    <ligand>
        <name>tRNA</name>
        <dbReference type="ChEBI" id="CHEBI:17843"/>
    </ligand>
</feature>
<feature type="site" description="Discriminates between blocked and unblocked aminoacyl-tRNA" evidence="1">
    <location>
        <position position="10"/>
    </location>
</feature>
<feature type="site" description="Stabilizes the basic form of H active site to accept a proton" evidence="1">
    <location>
        <position position="93"/>
    </location>
</feature>
<evidence type="ECO:0000255" key="1">
    <source>
        <dbReference type="HAMAP-Rule" id="MF_00083"/>
    </source>
</evidence>
<proteinExistence type="inferred from homology"/>
<gene>
    <name evidence="1" type="primary">pth</name>
    <name type="ordered locus">SpyM3_0005</name>
</gene>
<sequence length="189" mass="21136">MVKMIVGLGNPGSKYEKTKHNIGFMAIDNIVKNLDVTFTDDKNFKAQIGSTFINHEKVCFVKPTTFMNNSGIAVKALLTYYNIDITDLIVIYDDLDMEVSKLRLRSKGSAGGHNGIKSIIAHIGTQEFNRIKVGIGRPLKGMTVINHVMGQFNTEDNIAISLTLDRVVNAVKFYLQENDFEKTMQKFNG</sequence>
<organism>
    <name type="scientific">Streptococcus pyogenes serotype M3 (strain ATCC BAA-595 / MGAS315)</name>
    <dbReference type="NCBI Taxonomy" id="198466"/>
    <lineage>
        <taxon>Bacteria</taxon>
        <taxon>Bacillati</taxon>
        <taxon>Bacillota</taxon>
        <taxon>Bacilli</taxon>
        <taxon>Lactobacillales</taxon>
        <taxon>Streptococcaceae</taxon>
        <taxon>Streptococcus</taxon>
    </lineage>
</organism>
<accession>P0DD50</accession>
<accession>Q8K8Z7</accession>
<protein>
    <recommendedName>
        <fullName evidence="1">Peptidyl-tRNA hydrolase</fullName>
        <shortName evidence="1">Pth</shortName>
        <ecNumber evidence="1">3.1.1.29</ecNumber>
    </recommendedName>
</protein>
<name>PTH_STRP3</name>
<reference key="1">
    <citation type="journal article" date="2002" name="Proc. Natl. Acad. Sci. U.S.A.">
        <title>Genome sequence of a serotype M3 strain of group A Streptococcus: phage-encoded toxins, the high-virulence phenotype, and clone emergence.</title>
        <authorList>
            <person name="Beres S.B."/>
            <person name="Sylva G.L."/>
            <person name="Barbian K.D."/>
            <person name="Lei B."/>
            <person name="Hoff J.S."/>
            <person name="Mammarella N.D."/>
            <person name="Liu M.-Y."/>
            <person name="Smoot J.C."/>
            <person name="Porcella S.F."/>
            <person name="Parkins L.D."/>
            <person name="Campbell D.S."/>
            <person name="Smith T.M."/>
            <person name="McCormick J.K."/>
            <person name="Leung D.Y.M."/>
            <person name="Schlievert P.M."/>
            <person name="Musser J.M."/>
        </authorList>
    </citation>
    <scope>NUCLEOTIDE SEQUENCE [LARGE SCALE GENOMIC DNA]</scope>
    <source>
        <strain>ATCC BAA-595 / MGAS315</strain>
    </source>
</reference>
<keyword id="KW-0963">Cytoplasm</keyword>
<keyword id="KW-0378">Hydrolase</keyword>
<keyword id="KW-0694">RNA-binding</keyword>
<keyword id="KW-0820">tRNA-binding</keyword>
<comment type="function">
    <text evidence="1">Hydrolyzes ribosome-free peptidyl-tRNAs (with 1 or more amino acids incorporated), which drop off the ribosome during protein synthesis, or as a result of ribosome stalling.</text>
</comment>
<comment type="function">
    <text evidence="1">Catalyzes the release of premature peptidyl moieties from peptidyl-tRNA molecules trapped in stalled 50S ribosomal subunits, and thus maintains levels of free tRNAs and 50S ribosomes.</text>
</comment>
<comment type="catalytic activity">
    <reaction evidence="1">
        <text>an N-acyl-L-alpha-aminoacyl-tRNA + H2O = an N-acyl-L-amino acid + a tRNA + H(+)</text>
        <dbReference type="Rhea" id="RHEA:54448"/>
        <dbReference type="Rhea" id="RHEA-COMP:10123"/>
        <dbReference type="Rhea" id="RHEA-COMP:13883"/>
        <dbReference type="ChEBI" id="CHEBI:15377"/>
        <dbReference type="ChEBI" id="CHEBI:15378"/>
        <dbReference type="ChEBI" id="CHEBI:59874"/>
        <dbReference type="ChEBI" id="CHEBI:78442"/>
        <dbReference type="ChEBI" id="CHEBI:138191"/>
        <dbReference type="EC" id="3.1.1.29"/>
    </reaction>
</comment>
<comment type="subunit">
    <text evidence="1">Monomer.</text>
</comment>
<comment type="subcellular location">
    <subcellularLocation>
        <location evidence="1">Cytoplasm</location>
    </subcellularLocation>
</comment>
<comment type="similarity">
    <text evidence="1">Belongs to the PTH family.</text>
</comment>
<dbReference type="EC" id="3.1.1.29" evidence="1"/>
<dbReference type="EMBL" id="AE014074">
    <property type="protein sequence ID" value="AAM78612.1"/>
    <property type="molecule type" value="Genomic_DNA"/>
</dbReference>
<dbReference type="RefSeq" id="WP_011054086.1">
    <property type="nucleotide sequence ID" value="NC_004070.1"/>
</dbReference>
<dbReference type="SMR" id="P0DD50"/>
<dbReference type="KEGG" id="spg:SpyM3_0005"/>
<dbReference type="HOGENOM" id="CLU_062456_4_1_9"/>
<dbReference type="Proteomes" id="UP000000564">
    <property type="component" value="Chromosome"/>
</dbReference>
<dbReference type="GO" id="GO:0005737">
    <property type="term" value="C:cytoplasm"/>
    <property type="evidence" value="ECO:0007669"/>
    <property type="project" value="UniProtKB-SubCell"/>
</dbReference>
<dbReference type="GO" id="GO:0004045">
    <property type="term" value="F:peptidyl-tRNA hydrolase activity"/>
    <property type="evidence" value="ECO:0007669"/>
    <property type="project" value="UniProtKB-UniRule"/>
</dbReference>
<dbReference type="GO" id="GO:0000049">
    <property type="term" value="F:tRNA binding"/>
    <property type="evidence" value="ECO:0007669"/>
    <property type="project" value="UniProtKB-UniRule"/>
</dbReference>
<dbReference type="GO" id="GO:0006515">
    <property type="term" value="P:protein quality control for misfolded or incompletely synthesized proteins"/>
    <property type="evidence" value="ECO:0007669"/>
    <property type="project" value="UniProtKB-UniRule"/>
</dbReference>
<dbReference type="GO" id="GO:0072344">
    <property type="term" value="P:rescue of stalled ribosome"/>
    <property type="evidence" value="ECO:0007669"/>
    <property type="project" value="UniProtKB-UniRule"/>
</dbReference>
<dbReference type="CDD" id="cd00462">
    <property type="entry name" value="PTH"/>
    <property type="match status" value="1"/>
</dbReference>
<dbReference type="FunFam" id="3.40.50.1470:FF:000001">
    <property type="entry name" value="Peptidyl-tRNA hydrolase"/>
    <property type="match status" value="1"/>
</dbReference>
<dbReference type="Gene3D" id="3.40.50.1470">
    <property type="entry name" value="Peptidyl-tRNA hydrolase"/>
    <property type="match status" value="1"/>
</dbReference>
<dbReference type="HAMAP" id="MF_00083">
    <property type="entry name" value="Pept_tRNA_hydro_bact"/>
    <property type="match status" value="1"/>
</dbReference>
<dbReference type="InterPro" id="IPR001328">
    <property type="entry name" value="Pept_tRNA_hydro"/>
</dbReference>
<dbReference type="InterPro" id="IPR018171">
    <property type="entry name" value="Pept_tRNA_hydro_CS"/>
</dbReference>
<dbReference type="InterPro" id="IPR036416">
    <property type="entry name" value="Pept_tRNA_hydro_sf"/>
</dbReference>
<dbReference type="NCBIfam" id="TIGR00447">
    <property type="entry name" value="pth"/>
    <property type="match status" value="1"/>
</dbReference>
<dbReference type="PANTHER" id="PTHR17224">
    <property type="entry name" value="PEPTIDYL-TRNA HYDROLASE"/>
    <property type="match status" value="1"/>
</dbReference>
<dbReference type="PANTHER" id="PTHR17224:SF1">
    <property type="entry name" value="PEPTIDYL-TRNA HYDROLASE"/>
    <property type="match status" value="1"/>
</dbReference>
<dbReference type="Pfam" id="PF01195">
    <property type="entry name" value="Pept_tRNA_hydro"/>
    <property type="match status" value="1"/>
</dbReference>
<dbReference type="SUPFAM" id="SSF53178">
    <property type="entry name" value="Peptidyl-tRNA hydrolase-like"/>
    <property type="match status" value="1"/>
</dbReference>
<dbReference type="PROSITE" id="PS01195">
    <property type="entry name" value="PEPT_TRNA_HYDROL_1"/>
    <property type="match status" value="1"/>
</dbReference>
<dbReference type="PROSITE" id="PS01196">
    <property type="entry name" value="PEPT_TRNA_HYDROL_2"/>
    <property type="match status" value="1"/>
</dbReference>